<reference key="1">
    <citation type="journal article" date="1993" name="J. Gen. Virol.">
        <title>RNA sequence of potato virus X strain HB.</title>
        <authorList>
            <person name="Querci M."/>
            <person name="van der Vlugt R."/>
            <person name="Goldbach R."/>
            <person name="Salazar L.F."/>
        </authorList>
    </citation>
    <scope>NUCLEOTIDE SEQUENCE [GENOMIC RNA]</scope>
</reference>
<reference key="2">
    <citation type="journal article" date="2005" name="Mol. Plant Microbe Interact.">
        <title>A new cell-to-cell transport model for Potexviruses.</title>
        <authorList>
            <person name="Verchot-Lubicz J."/>
        </authorList>
    </citation>
    <scope>REVIEW</scope>
</reference>
<keyword id="KW-1038">Host endoplasmic reticulum</keyword>
<keyword id="KW-1043">Host membrane</keyword>
<keyword id="KW-0472">Membrane</keyword>
<keyword id="KW-0812">Transmembrane</keyword>
<keyword id="KW-1133">Transmembrane helix</keyword>
<keyword id="KW-0813">Transport</keyword>
<keyword id="KW-0916">Viral movement protein</keyword>
<proteinExistence type="inferred from homology"/>
<gene>
    <name type="ORF">ORF4</name>
</gene>
<organismHost>
    <name type="scientific">Brassica campestris</name>
    <name type="common">Field mustard</name>
    <dbReference type="NCBI Taxonomy" id="3711"/>
</organismHost>
<organismHost>
    <name type="scientific">Solanum tuberosum</name>
    <name type="common">Potato</name>
    <dbReference type="NCBI Taxonomy" id="4113"/>
</organismHost>
<comment type="function">
    <text evidence="1">Plays a role in viral cell-to-cell propagation, by facilitating genome transport to neighboring plant cells through plasmosdesmata. May induce the formation of granular vesicles derived from the Endoplasmic reticulum, which align on actin filaments (By similarity).</text>
</comment>
<comment type="subcellular location">
    <subcellularLocation>
        <location evidence="1">Host endoplasmic reticulum membrane</location>
    </subcellularLocation>
</comment>
<comment type="miscellaneous">
    <text>TGBp1, TGBp2 and TGBp3 seem to act together for cell-to-cell propagation. TGBp1 is the main movement protein that physically cross the plasmodesma with the viral genome. TGBp2 and TGBp3 would facilitate TGBp1 function.</text>
</comment>
<comment type="similarity">
    <text evidence="3">Belongs to the Tymovirales TGBp3 protein family.</text>
</comment>
<evidence type="ECO:0000250" key="1"/>
<evidence type="ECO:0000255" key="2"/>
<evidence type="ECO:0000305" key="3"/>
<name>TGB3_PVXHB</name>
<organism>
    <name type="scientific">Potato virus X (strain HB)</name>
    <name type="common">PVX</name>
    <dbReference type="NCBI Taxonomy" id="73488"/>
    <lineage>
        <taxon>Viruses</taxon>
        <taxon>Riboviria</taxon>
        <taxon>Orthornavirae</taxon>
        <taxon>Kitrinoviricota</taxon>
        <taxon>Alsuviricetes</taxon>
        <taxon>Tymovirales</taxon>
        <taxon>Alphaflexiviridae</taxon>
        <taxon>Potexvirus</taxon>
        <taxon>Potato virus X</taxon>
    </lineage>
</organism>
<protein>
    <recommendedName>
        <fullName>Movement protein TGBp3</fullName>
    </recommendedName>
    <alternativeName>
        <fullName>9.7 kDa protein</fullName>
    </alternativeName>
    <alternativeName>
        <fullName>Triple gene block 3 protein</fullName>
        <shortName>TGBp3</shortName>
    </alternativeName>
</protein>
<dbReference type="EMBL" id="X72214">
    <property type="protein sequence ID" value="CAA51015.1"/>
    <property type="molecule type" value="Genomic_RNA"/>
</dbReference>
<dbReference type="PIR" id="JQ2297">
    <property type="entry name" value="JQ2297"/>
</dbReference>
<dbReference type="Proteomes" id="UP000006842">
    <property type="component" value="Genome"/>
</dbReference>
<dbReference type="GO" id="GO:0044167">
    <property type="term" value="C:host cell endoplasmic reticulum membrane"/>
    <property type="evidence" value="ECO:0007669"/>
    <property type="project" value="UniProtKB-SubCell"/>
</dbReference>
<dbReference type="GO" id="GO:0016020">
    <property type="term" value="C:membrane"/>
    <property type="evidence" value="ECO:0007669"/>
    <property type="project" value="UniProtKB-KW"/>
</dbReference>
<dbReference type="GO" id="GO:0046740">
    <property type="term" value="P:transport of virus in host, cell to cell"/>
    <property type="evidence" value="ECO:0007669"/>
    <property type="project" value="UniProtKB-KW"/>
</dbReference>
<dbReference type="InterPro" id="IPR003411">
    <property type="entry name" value="TGBp3"/>
</dbReference>
<dbReference type="Pfam" id="PF02495">
    <property type="entry name" value="TGBp3"/>
    <property type="match status" value="1"/>
</dbReference>
<sequence length="71" mass="7635">MEAGAYLNAIIFVLVATIIAVISVGLTQTEPCTIRITGESITVHACHLDSETIKALATLKPLSLERLSFHQ</sequence>
<accession>Q07631</accession>
<feature type="chain" id="PRO_0000222606" description="Movement protein TGBp3">
    <location>
        <begin position="1"/>
        <end position="71"/>
    </location>
</feature>
<feature type="topological domain" description="Lumenal" evidence="2">
    <location>
        <begin position="1"/>
        <end position="3"/>
    </location>
</feature>
<feature type="transmembrane region" description="Helical" evidence="2">
    <location>
        <begin position="4"/>
        <end position="26"/>
    </location>
</feature>
<feature type="topological domain" description="Cytoplasmic" evidence="2">
    <location>
        <begin position="27"/>
        <end position="71"/>
    </location>
</feature>